<reference evidence="4" key="1">
    <citation type="journal article" date="2003" name="PLoS Biol.">
        <title>The genome sequence of Caenorhabditis briggsae: a platform for comparative genomics.</title>
        <authorList>
            <person name="Stein L.D."/>
            <person name="Bao Z."/>
            <person name="Blasiar D."/>
            <person name="Blumenthal T."/>
            <person name="Brent M.R."/>
            <person name="Chen N."/>
            <person name="Chinwalla A."/>
            <person name="Clarke L."/>
            <person name="Clee C."/>
            <person name="Coghlan A."/>
            <person name="Coulson A."/>
            <person name="D'Eustachio P."/>
            <person name="Fitch D.H.A."/>
            <person name="Fulton L.A."/>
            <person name="Fulton R.E."/>
            <person name="Griffiths-Jones S."/>
            <person name="Harris T.W."/>
            <person name="Hillier L.W."/>
            <person name="Kamath R."/>
            <person name="Kuwabara P.E."/>
            <person name="Mardis E.R."/>
            <person name="Marra M.A."/>
            <person name="Miner T.L."/>
            <person name="Minx P."/>
            <person name="Mullikin J.C."/>
            <person name="Plumb R.W."/>
            <person name="Rogers J."/>
            <person name="Schein J.E."/>
            <person name="Sohrmann M."/>
            <person name="Spieth J."/>
            <person name="Stajich J.E."/>
            <person name="Wei C."/>
            <person name="Willey D."/>
            <person name="Wilson R.K."/>
            <person name="Durbin R.M."/>
            <person name="Waterston R.H."/>
        </authorList>
    </citation>
    <scope>NUCLEOTIDE SEQUENCE [LARGE SCALE GENOMIC DNA]</scope>
    <source>
        <strain evidence="4">AF16</strain>
    </source>
</reference>
<dbReference type="EMBL" id="HE601284">
    <property type="protein sequence ID" value="CAP28754.2"/>
    <property type="molecule type" value="Genomic_DNA"/>
</dbReference>
<dbReference type="FunCoup" id="A8X7Z3">
    <property type="interactions" value="1311"/>
</dbReference>
<dbReference type="STRING" id="6238.A8X7Z3"/>
<dbReference type="WormBase" id="CBG09031a">
    <property type="protein sequence ID" value="CBP44409"/>
    <property type="gene ID" value="WBGene00030699"/>
    <property type="gene designation" value="Cbr-dct-6"/>
</dbReference>
<dbReference type="eggNOG" id="ENOG502TGY7">
    <property type="taxonomic scope" value="Eukaryota"/>
</dbReference>
<dbReference type="HOGENOM" id="CLU_318130_0_0_1"/>
<dbReference type="InParanoid" id="A8X7Z3"/>
<dbReference type="OMA" id="AYYDGFV"/>
<dbReference type="Proteomes" id="UP000008549">
    <property type="component" value="Unassembled WGS sequence"/>
</dbReference>
<dbReference type="Gene3D" id="2.130.10.10">
    <property type="entry name" value="YVTN repeat-like/Quinoprotein amine dehydrogenase"/>
    <property type="match status" value="1"/>
</dbReference>
<dbReference type="InterPro" id="IPR015943">
    <property type="entry name" value="WD40/YVTN_repeat-like_dom_sf"/>
</dbReference>
<dbReference type="InterPro" id="IPR036322">
    <property type="entry name" value="WD40_repeat_dom_sf"/>
</dbReference>
<dbReference type="SUPFAM" id="SSF50978">
    <property type="entry name" value="WD40 repeat-like"/>
    <property type="match status" value="1"/>
</dbReference>
<organism>
    <name type="scientific">Caenorhabditis briggsae</name>
    <dbReference type="NCBI Taxonomy" id="6238"/>
    <lineage>
        <taxon>Eukaryota</taxon>
        <taxon>Metazoa</taxon>
        <taxon>Ecdysozoa</taxon>
        <taxon>Nematoda</taxon>
        <taxon>Chromadorea</taxon>
        <taxon>Rhabditida</taxon>
        <taxon>Rhabditina</taxon>
        <taxon>Rhabditomorpha</taxon>
        <taxon>Rhabditoidea</taxon>
        <taxon>Rhabditidae</taxon>
        <taxon>Peloderinae</taxon>
        <taxon>Caenorhabditis</taxon>
    </lineage>
</organism>
<gene>
    <name evidence="4" type="primary">dct-6</name>
    <name type="ORF">CBG09031</name>
</gene>
<evidence type="ECO:0000250" key="1"/>
<evidence type="ECO:0000250" key="2">
    <source>
        <dbReference type="UniProtKB" id="Q09313"/>
    </source>
</evidence>
<evidence type="ECO:0000255" key="3"/>
<evidence type="ECO:0000312" key="4">
    <source>
        <dbReference type="EMBL" id="CAP28754.2"/>
    </source>
</evidence>
<name>DCT6_CAEBR</name>
<proteinExistence type="inferred from homology"/>
<keyword id="KW-0175">Coiled coil</keyword>
<keyword id="KW-1185">Reference proteome</keyword>
<accession>A8X7Z3</accession>
<protein>
    <recommendedName>
        <fullName evidence="2">Protein dct-6</fullName>
    </recommendedName>
    <alternativeName>
        <fullName>Daf-16/foxo controlled, germline tumor-affecting protein 6</fullName>
    </alternativeName>
</protein>
<feature type="chain" id="PRO_0000365629" description="Protein dct-6">
    <location>
        <begin position="1"/>
        <end position="946"/>
    </location>
</feature>
<feature type="coiled-coil region" evidence="3">
    <location>
        <begin position="326"/>
        <end position="363"/>
    </location>
</feature>
<comment type="function">
    <text evidence="1">May have a role in tumor suppression.</text>
</comment>
<sequence>MIESTTSHQDFQQRSMTGYALEHPSYRVRGALFRHQDDGRLLSGTSSNFFHVRSSSKITGCGGDLEVIHALELERSQHTGLPVRVTNVVVFGSNDVVRLIQPIEGTEDVIVNGDYHVSIVQSVELFESSTVSKSRILKLPGKIVAVNAEKHSNTELLLVFLLETGLYHYSFCAQTSDHFQCIQAFRCNRPITSGLLWRDSGLLHVAYYDGFVRVGVVHEQYDDMLLVKRVAVNRNNLSVLLDVVFEEIGRIQKFEDTEKQRREDMLTTSKCLSDKLVSEEEVVEGDTATEDFAKLKVDFKNQSIRCERVSQRLISLRKLITIIKSYMDMNDQIEQMIALLVDQLEELEKLEQLCDEVQKTGNQNLIGKSWIAVEEKRMVVDELIAKVNSDQIKKHSAEWGNKIDQIIDQLNGCSESAKDMRMIISQNIFEHRGDKKDVYTHFVLDSQSRDITLYCLSGLTTLAIYPRKGKRHTSKTTNIRKSQIFRVASISLDASFATCLTAACAMKSAEGVYVADQNAVFPIYFYSEKRYLDAGNQLQIPAFDSISSILIEPHQMILGSVTGGLLHLSFDFASNYEHFVVASSMLAHPISSGAVNCIKLLATGESLLALHCTDAEVVVSEKDQDRWHRVTHHTGGAHSIAVTPFSVDERGSFAVVASDTFVRLKALQYAEESLIGLHDLGESRAEDENGHPIEVLNVSLDPSMQYRQLPCKLRYAVGFSDKAIRTYVALLTGQHDFTVTEKFIAQIEPLFSVQNMICFHGRPMGCYVSCAKTLQIWNDLDRHQQKKLKSERMQLLKLSSSVTSMERTEGFLLVGFADDRLSIYEEKGNGAVDLVGTIENWHTGLNDRSVLGLRTRISKTSCGTRLFIHSLTAHHIVIHTVLVTSSKIEQHDFIVAHEHSMSQPIGFEFVSYKYFEFLVYGRGISNEKLSIEDRKRMDCFRDFEFN</sequence>